<dbReference type="EMBL" id="DQ422812">
    <property type="protein sequence ID" value="ABD62262.2"/>
    <property type="molecule type" value="Genomic_DNA"/>
</dbReference>
<dbReference type="RefSeq" id="YP_001019142.1">
    <property type="nucleotide sequence ID" value="NC_008822.1"/>
</dbReference>
<dbReference type="GeneID" id="4783290"/>
<dbReference type="GO" id="GO:0009535">
    <property type="term" value="C:chloroplast thylakoid membrane"/>
    <property type="evidence" value="ECO:0007669"/>
    <property type="project" value="UniProtKB-SubCell"/>
</dbReference>
<dbReference type="GO" id="GO:0009522">
    <property type="term" value="C:photosystem I"/>
    <property type="evidence" value="ECO:0007669"/>
    <property type="project" value="InterPro"/>
</dbReference>
<dbReference type="GO" id="GO:0015979">
    <property type="term" value="P:photosynthesis"/>
    <property type="evidence" value="ECO:0007669"/>
    <property type="project" value="UniProtKB-UniRule"/>
</dbReference>
<dbReference type="HAMAP" id="MF_00437">
    <property type="entry name" value="Ycf4"/>
    <property type="match status" value="1"/>
</dbReference>
<dbReference type="InterPro" id="IPR003359">
    <property type="entry name" value="PSI_Ycf4_assembly"/>
</dbReference>
<dbReference type="NCBIfam" id="NF002712">
    <property type="entry name" value="PRK02542.1"/>
    <property type="match status" value="1"/>
</dbReference>
<dbReference type="PANTHER" id="PTHR33288">
    <property type="match status" value="1"/>
</dbReference>
<dbReference type="PANTHER" id="PTHR33288:SF4">
    <property type="entry name" value="PHOTOSYSTEM I ASSEMBLY PROTEIN YCF4"/>
    <property type="match status" value="1"/>
</dbReference>
<dbReference type="Pfam" id="PF02392">
    <property type="entry name" value="Ycf4"/>
    <property type="match status" value="1"/>
</dbReference>
<evidence type="ECO:0000255" key="1">
    <source>
        <dbReference type="HAMAP-Rule" id="MF_00437"/>
    </source>
</evidence>
<comment type="function">
    <text evidence="1">Seems to be required for the assembly of the photosystem I complex.</text>
</comment>
<comment type="subcellular location">
    <subcellularLocation>
        <location evidence="1">Plastid</location>
        <location evidence="1">Chloroplast thylakoid membrane</location>
        <topology evidence="1">Multi-pass membrane protein</topology>
    </subcellularLocation>
</comment>
<comment type="similarity">
    <text evidence="1">Belongs to the Ycf4 family.</text>
</comment>
<geneLocation type="chloroplast"/>
<sequence length="189" mass="21527">MTNSSIDSKSDLIRRDPVLGSRRLSNYWWATVILVGASGFFLVGISSYFGFNLVPFIKSEEILFIPQGLVMSFYGVAGILLSVYLWLTIIWNVGEGYNEYNKQDGIVRIFRWGFPGKNRRIDLVYPIQDVQAIRVEIKEGINPRRVIYLKIKGKREIPLTRIGQPLTLGEIEEKAANLARFLQVSIEGL</sequence>
<reference key="1">
    <citation type="journal article" date="2007" name="BMC Biol.">
        <title>A clade uniting the green algae Mesostigma viride and Chlorokybus atmophyticus represents the deepest branch of the Streptophyta in chloroplast genome-based phylogenies.</title>
        <authorList>
            <person name="Lemieux C."/>
            <person name="Otis C."/>
            <person name="Turmel M."/>
        </authorList>
    </citation>
    <scope>NUCLEOTIDE SEQUENCE [LARGE SCALE GENOMIC DNA]</scope>
    <source>
        <strain>SAG 48.80</strain>
    </source>
</reference>
<feature type="chain" id="PRO_0000326001" description="Photosystem I assembly protein Ycf4">
    <location>
        <begin position="1"/>
        <end position="189"/>
    </location>
</feature>
<feature type="transmembrane region" description="Helical" evidence="1">
    <location>
        <begin position="31"/>
        <end position="51"/>
    </location>
</feature>
<feature type="transmembrane region" description="Helical" evidence="1">
    <location>
        <begin position="70"/>
        <end position="90"/>
    </location>
</feature>
<gene>
    <name evidence="1" type="primary">ycf4</name>
</gene>
<name>YCF4_CHLAT</name>
<protein>
    <recommendedName>
        <fullName evidence="1">Photosystem I assembly protein Ycf4</fullName>
    </recommendedName>
</protein>
<keyword id="KW-0150">Chloroplast</keyword>
<keyword id="KW-0472">Membrane</keyword>
<keyword id="KW-0602">Photosynthesis</keyword>
<keyword id="KW-0934">Plastid</keyword>
<keyword id="KW-0793">Thylakoid</keyword>
<keyword id="KW-0812">Transmembrane</keyword>
<keyword id="KW-1133">Transmembrane helix</keyword>
<organism>
    <name type="scientific">Chlorokybus atmophyticus</name>
    <name type="common">Soil alga</name>
    <dbReference type="NCBI Taxonomy" id="3144"/>
    <lineage>
        <taxon>Eukaryota</taxon>
        <taxon>Viridiplantae</taxon>
        <taxon>Streptophyta</taxon>
        <taxon>Chlorokybophyceae</taxon>
        <taxon>Chlorokybales</taxon>
        <taxon>Chlorokybaceae</taxon>
        <taxon>Chlorokybus</taxon>
    </lineage>
</organism>
<accession>Q19V70</accession>
<proteinExistence type="inferred from homology"/>